<reference key="1">
    <citation type="journal article" date="1998" name="Nature">
        <title>Analysis of 1.9 Mb of contiguous sequence from chromosome 4 of Arabidopsis thaliana.</title>
        <authorList>
            <person name="Bevan M."/>
            <person name="Bancroft I."/>
            <person name="Bent E."/>
            <person name="Love K."/>
            <person name="Goodman H.M."/>
            <person name="Dean C."/>
            <person name="Bergkamp R."/>
            <person name="Dirkse W."/>
            <person name="van Staveren M."/>
            <person name="Stiekema W."/>
            <person name="Drost L."/>
            <person name="Ridley P."/>
            <person name="Hudson S.-A."/>
            <person name="Patel K."/>
            <person name="Murphy G."/>
            <person name="Piffanelli P."/>
            <person name="Wedler H."/>
            <person name="Wedler E."/>
            <person name="Wambutt R."/>
            <person name="Weitzenegger T."/>
            <person name="Pohl T."/>
            <person name="Terryn N."/>
            <person name="Gielen J."/>
            <person name="Villarroel R."/>
            <person name="De Clercq R."/>
            <person name="van Montagu M."/>
            <person name="Lecharny A."/>
            <person name="Aubourg S."/>
            <person name="Gy I."/>
            <person name="Kreis M."/>
            <person name="Lao N."/>
            <person name="Kavanagh T."/>
            <person name="Hempel S."/>
            <person name="Kotter P."/>
            <person name="Entian K.-D."/>
            <person name="Rieger M."/>
            <person name="Schaefer M."/>
            <person name="Funk B."/>
            <person name="Mueller-Auer S."/>
            <person name="Silvey M."/>
            <person name="James R."/>
            <person name="Monfort A."/>
            <person name="Pons A."/>
            <person name="Puigdomenech P."/>
            <person name="Douka A."/>
            <person name="Voukelatou E."/>
            <person name="Milioni D."/>
            <person name="Hatzopoulos P."/>
            <person name="Piravandi E."/>
            <person name="Obermaier B."/>
            <person name="Hilbert H."/>
            <person name="Duesterhoeft A."/>
            <person name="Moores T."/>
            <person name="Jones J.D.G."/>
            <person name="Eneva T."/>
            <person name="Palme K."/>
            <person name="Benes V."/>
            <person name="Rechmann S."/>
            <person name="Ansorge W."/>
            <person name="Cooke R."/>
            <person name="Berger C."/>
            <person name="Delseny M."/>
            <person name="Voet M."/>
            <person name="Volckaert G."/>
            <person name="Mewes H.-W."/>
            <person name="Klosterman S."/>
            <person name="Schueller C."/>
            <person name="Chalwatzis N."/>
        </authorList>
    </citation>
    <scope>NUCLEOTIDE SEQUENCE [LARGE SCALE GENOMIC DNA]</scope>
    <source>
        <strain>cv. Columbia</strain>
    </source>
</reference>
<reference key="2">
    <citation type="journal article" date="1999" name="Nature">
        <title>Sequence and analysis of chromosome 4 of the plant Arabidopsis thaliana.</title>
        <authorList>
            <person name="Mayer K.F.X."/>
            <person name="Schueller C."/>
            <person name="Wambutt R."/>
            <person name="Murphy G."/>
            <person name="Volckaert G."/>
            <person name="Pohl T."/>
            <person name="Duesterhoeft A."/>
            <person name="Stiekema W."/>
            <person name="Entian K.-D."/>
            <person name="Terryn N."/>
            <person name="Harris B."/>
            <person name="Ansorge W."/>
            <person name="Brandt P."/>
            <person name="Grivell L.A."/>
            <person name="Rieger M."/>
            <person name="Weichselgartner M."/>
            <person name="de Simone V."/>
            <person name="Obermaier B."/>
            <person name="Mache R."/>
            <person name="Mueller M."/>
            <person name="Kreis M."/>
            <person name="Delseny M."/>
            <person name="Puigdomenech P."/>
            <person name="Watson M."/>
            <person name="Schmidtheini T."/>
            <person name="Reichert B."/>
            <person name="Portetelle D."/>
            <person name="Perez-Alonso M."/>
            <person name="Boutry M."/>
            <person name="Bancroft I."/>
            <person name="Vos P."/>
            <person name="Hoheisel J."/>
            <person name="Zimmermann W."/>
            <person name="Wedler H."/>
            <person name="Ridley P."/>
            <person name="Langham S.-A."/>
            <person name="McCullagh B."/>
            <person name="Bilham L."/>
            <person name="Robben J."/>
            <person name="van der Schueren J."/>
            <person name="Grymonprez B."/>
            <person name="Chuang Y.-J."/>
            <person name="Vandenbussche F."/>
            <person name="Braeken M."/>
            <person name="Weltjens I."/>
            <person name="Voet M."/>
            <person name="Bastiaens I."/>
            <person name="Aert R."/>
            <person name="Defoor E."/>
            <person name="Weitzenegger T."/>
            <person name="Bothe G."/>
            <person name="Ramsperger U."/>
            <person name="Hilbert H."/>
            <person name="Braun M."/>
            <person name="Holzer E."/>
            <person name="Brandt A."/>
            <person name="Peters S."/>
            <person name="van Staveren M."/>
            <person name="Dirkse W."/>
            <person name="Mooijman P."/>
            <person name="Klein Lankhorst R."/>
            <person name="Rose M."/>
            <person name="Hauf J."/>
            <person name="Koetter P."/>
            <person name="Berneiser S."/>
            <person name="Hempel S."/>
            <person name="Feldpausch M."/>
            <person name="Lamberth S."/>
            <person name="Van den Daele H."/>
            <person name="De Keyser A."/>
            <person name="Buysshaert C."/>
            <person name="Gielen J."/>
            <person name="Villarroel R."/>
            <person name="De Clercq R."/>
            <person name="van Montagu M."/>
            <person name="Rogers J."/>
            <person name="Cronin A."/>
            <person name="Quail M.A."/>
            <person name="Bray-Allen S."/>
            <person name="Clark L."/>
            <person name="Doggett J."/>
            <person name="Hall S."/>
            <person name="Kay M."/>
            <person name="Lennard N."/>
            <person name="McLay K."/>
            <person name="Mayes R."/>
            <person name="Pettett A."/>
            <person name="Rajandream M.A."/>
            <person name="Lyne M."/>
            <person name="Benes V."/>
            <person name="Rechmann S."/>
            <person name="Borkova D."/>
            <person name="Bloecker H."/>
            <person name="Scharfe M."/>
            <person name="Grimm M."/>
            <person name="Loehnert T.-H."/>
            <person name="Dose S."/>
            <person name="de Haan M."/>
            <person name="Maarse A.C."/>
            <person name="Schaefer M."/>
            <person name="Mueller-Auer S."/>
            <person name="Gabel C."/>
            <person name="Fuchs M."/>
            <person name="Fartmann B."/>
            <person name="Granderath K."/>
            <person name="Dauner D."/>
            <person name="Herzl A."/>
            <person name="Neumann S."/>
            <person name="Argiriou A."/>
            <person name="Vitale D."/>
            <person name="Liguori R."/>
            <person name="Piravandi E."/>
            <person name="Massenet O."/>
            <person name="Quigley F."/>
            <person name="Clabauld G."/>
            <person name="Muendlein A."/>
            <person name="Felber R."/>
            <person name="Schnabl S."/>
            <person name="Hiller R."/>
            <person name="Schmidt W."/>
            <person name="Lecharny A."/>
            <person name="Aubourg S."/>
            <person name="Chefdor F."/>
            <person name="Cooke R."/>
            <person name="Berger C."/>
            <person name="Monfort A."/>
            <person name="Casacuberta E."/>
            <person name="Gibbons T."/>
            <person name="Weber N."/>
            <person name="Vandenbol M."/>
            <person name="Bargues M."/>
            <person name="Terol J."/>
            <person name="Torres A."/>
            <person name="Perez-Perez A."/>
            <person name="Purnelle B."/>
            <person name="Bent E."/>
            <person name="Johnson S."/>
            <person name="Tacon D."/>
            <person name="Jesse T."/>
            <person name="Heijnen L."/>
            <person name="Schwarz S."/>
            <person name="Scholler P."/>
            <person name="Heber S."/>
            <person name="Francs P."/>
            <person name="Bielke C."/>
            <person name="Frishman D."/>
            <person name="Haase D."/>
            <person name="Lemcke K."/>
            <person name="Mewes H.-W."/>
            <person name="Stocker S."/>
            <person name="Zaccaria P."/>
            <person name="Bevan M."/>
            <person name="Wilson R.K."/>
            <person name="de la Bastide M."/>
            <person name="Habermann K."/>
            <person name="Parnell L."/>
            <person name="Dedhia N."/>
            <person name="Gnoj L."/>
            <person name="Schutz K."/>
            <person name="Huang E."/>
            <person name="Spiegel L."/>
            <person name="Sekhon M."/>
            <person name="Murray J."/>
            <person name="Sheet P."/>
            <person name="Cordes M."/>
            <person name="Abu-Threideh J."/>
            <person name="Stoneking T."/>
            <person name="Kalicki J."/>
            <person name="Graves T."/>
            <person name="Harmon G."/>
            <person name="Edwards J."/>
            <person name="Latreille P."/>
            <person name="Courtney L."/>
            <person name="Cloud J."/>
            <person name="Abbott A."/>
            <person name="Scott K."/>
            <person name="Johnson D."/>
            <person name="Minx P."/>
            <person name="Bentley D."/>
            <person name="Fulton B."/>
            <person name="Miller N."/>
            <person name="Greco T."/>
            <person name="Kemp K."/>
            <person name="Kramer J."/>
            <person name="Fulton L."/>
            <person name="Mardis E."/>
            <person name="Dante M."/>
            <person name="Pepin K."/>
            <person name="Hillier L.W."/>
            <person name="Nelson J."/>
            <person name="Spieth J."/>
            <person name="Ryan E."/>
            <person name="Andrews S."/>
            <person name="Geisel C."/>
            <person name="Layman D."/>
            <person name="Du H."/>
            <person name="Ali J."/>
            <person name="Berghoff A."/>
            <person name="Jones K."/>
            <person name="Drone K."/>
            <person name="Cotton M."/>
            <person name="Joshu C."/>
            <person name="Antonoiu B."/>
            <person name="Zidanic M."/>
            <person name="Strong C."/>
            <person name="Sun H."/>
            <person name="Lamar B."/>
            <person name="Yordan C."/>
            <person name="Ma P."/>
            <person name="Zhong J."/>
            <person name="Preston R."/>
            <person name="Vil D."/>
            <person name="Shekher M."/>
            <person name="Matero A."/>
            <person name="Shah R."/>
            <person name="Swaby I.K."/>
            <person name="O'Shaughnessy A."/>
            <person name="Rodriguez M."/>
            <person name="Hoffman J."/>
            <person name="Till S."/>
            <person name="Granat S."/>
            <person name="Shohdy N."/>
            <person name="Hasegawa A."/>
            <person name="Hameed A."/>
            <person name="Lodhi M."/>
            <person name="Johnson A."/>
            <person name="Chen E."/>
            <person name="Marra M.A."/>
            <person name="Martienssen R."/>
            <person name="McCombie W.R."/>
        </authorList>
    </citation>
    <scope>NUCLEOTIDE SEQUENCE [LARGE SCALE GENOMIC DNA]</scope>
    <source>
        <strain>cv. Columbia</strain>
    </source>
</reference>
<reference key="3">
    <citation type="journal article" date="2017" name="Plant J.">
        <title>Araport11: a complete reannotation of the Arabidopsis thaliana reference genome.</title>
        <authorList>
            <person name="Cheng C.Y."/>
            <person name="Krishnakumar V."/>
            <person name="Chan A.P."/>
            <person name="Thibaud-Nissen F."/>
            <person name="Schobel S."/>
            <person name="Town C.D."/>
        </authorList>
    </citation>
    <scope>GENOME REANNOTATION</scope>
    <source>
        <strain>cv. Columbia</strain>
    </source>
</reference>
<reference key="4">
    <citation type="journal article" date="2003" name="Science">
        <title>Empirical analysis of transcriptional activity in the Arabidopsis genome.</title>
        <authorList>
            <person name="Yamada K."/>
            <person name="Lim J."/>
            <person name="Dale J.M."/>
            <person name="Chen H."/>
            <person name="Shinn P."/>
            <person name="Palm C.J."/>
            <person name="Southwick A.M."/>
            <person name="Wu H.C."/>
            <person name="Kim C.J."/>
            <person name="Nguyen M."/>
            <person name="Pham P.K."/>
            <person name="Cheuk R.F."/>
            <person name="Karlin-Newmann G."/>
            <person name="Liu S.X."/>
            <person name="Lam B."/>
            <person name="Sakano H."/>
            <person name="Wu T."/>
            <person name="Yu G."/>
            <person name="Miranda M."/>
            <person name="Quach H.L."/>
            <person name="Tripp M."/>
            <person name="Chang C.H."/>
            <person name="Lee J.M."/>
            <person name="Toriumi M.J."/>
            <person name="Chan M.M."/>
            <person name="Tang C.C."/>
            <person name="Onodera C.S."/>
            <person name="Deng J.M."/>
            <person name="Akiyama K."/>
            <person name="Ansari Y."/>
            <person name="Arakawa T."/>
            <person name="Banh J."/>
            <person name="Banno F."/>
            <person name="Bowser L."/>
            <person name="Brooks S.Y."/>
            <person name="Carninci P."/>
            <person name="Chao Q."/>
            <person name="Choy N."/>
            <person name="Enju A."/>
            <person name="Goldsmith A.D."/>
            <person name="Gurjal M."/>
            <person name="Hansen N.F."/>
            <person name="Hayashizaki Y."/>
            <person name="Johnson-Hopson C."/>
            <person name="Hsuan V.W."/>
            <person name="Iida K."/>
            <person name="Karnes M."/>
            <person name="Khan S."/>
            <person name="Koesema E."/>
            <person name="Ishida J."/>
            <person name="Jiang P.X."/>
            <person name="Jones T."/>
            <person name="Kawai J."/>
            <person name="Kamiya A."/>
            <person name="Meyers C."/>
            <person name="Nakajima M."/>
            <person name="Narusaka M."/>
            <person name="Seki M."/>
            <person name="Sakurai T."/>
            <person name="Satou M."/>
            <person name="Tamse R."/>
            <person name="Vaysberg M."/>
            <person name="Wallender E.K."/>
            <person name="Wong C."/>
            <person name="Yamamura Y."/>
            <person name="Yuan S."/>
            <person name="Shinozaki K."/>
            <person name="Davis R.W."/>
            <person name="Theologis A."/>
            <person name="Ecker J.R."/>
        </authorList>
    </citation>
    <scope>NUCLEOTIDE SEQUENCE [LARGE SCALE MRNA]</scope>
    <source>
        <strain>cv. Columbia</strain>
    </source>
</reference>
<reference key="5">
    <citation type="submission" date="2006-07" db="EMBL/GenBank/DDBJ databases">
        <title>Large-scale analysis of RIKEN Arabidopsis full-length (RAFL) cDNAs.</title>
        <authorList>
            <person name="Totoki Y."/>
            <person name="Seki M."/>
            <person name="Ishida J."/>
            <person name="Nakajima M."/>
            <person name="Enju A."/>
            <person name="Kamiya A."/>
            <person name="Narusaka M."/>
            <person name="Shin-i T."/>
            <person name="Nakagawa M."/>
            <person name="Sakamoto N."/>
            <person name="Oishi K."/>
            <person name="Kohara Y."/>
            <person name="Kobayashi M."/>
            <person name="Toyoda A."/>
            <person name="Sakaki Y."/>
            <person name="Sakurai T."/>
            <person name="Iida K."/>
            <person name="Akiyama K."/>
            <person name="Satou M."/>
            <person name="Toyoda T."/>
            <person name="Konagaya A."/>
            <person name="Carninci P."/>
            <person name="Kawai J."/>
            <person name="Hayashizaki Y."/>
            <person name="Shinozaki K."/>
        </authorList>
    </citation>
    <scope>NUCLEOTIDE SEQUENCE [LARGE SCALE MRNA]</scope>
    <source>
        <strain>cv. Columbia</strain>
    </source>
</reference>
<reference key="6">
    <citation type="submission" date="2002-03" db="EMBL/GenBank/DDBJ databases">
        <title>Full-length cDNA from Arabidopsis thaliana.</title>
        <authorList>
            <person name="Brover V.V."/>
            <person name="Troukhan M.E."/>
            <person name="Alexandrov N.A."/>
            <person name="Lu Y.-P."/>
            <person name="Flavell R.B."/>
            <person name="Feldmann K.A."/>
        </authorList>
    </citation>
    <scope>NUCLEOTIDE SEQUENCE [LARGE SCALE MRNA]</scope>
</reference>
<reference key="7">
    <citation type="journal article" date="2014" name="Plant Physiol.">
        <title>Functional and evolutionary analysis of the CASPARIAN STRIP MEMBRANE DOMAIN PROTEIN family.</title>
        <authorList>
            <person name="Roppolo D."/>
            <person name="Boeckmann B."/>
            <person name="Pfister A."/>
            <person name="Boutet E."/>
            <person name="Rubio M.C."/>
            <person name="Denervaud-Tendon V."/>
            <person name="Vermeer J.E."/>
            <person name="Gheyselinck J."/>
            <person name="Xenarios I."/>
            <person name="Geldner N."/>
        </authorList>
    </citation>
    <scope>SUBCELLULAR LOCATION</scope>
    <scope>GENE FAMILY</scope>
    <scope>NOMENCLATURE</scope>
</reference>
<sequence>MGYETKSTLDTERSTAPGTGTTTKSCSMTQVVLRFVLFAATLTSIVVMVTSKQTKNIFLPGTPIRIPAAEFTNSPALIYFVVALSVACFYSIVSTFVTVSAFKKHSCSAVLLLNLAIMDAVMVGIVASATGAGGGVAYLGLKGNKEVRWGKICHIYDKFCRHVGGAIAVSLFASVVLLLLSIISVLSLYKKIR</sequence>
<name>CSPLM_ARATH</name>
<gene>
    <name type="ordered locus">At4g15610</name>
    <name type="ORF">Dl3845w</name>
    <name type="ORF">FCAALL.139</name>
</gene>
<organism>
    <name type="scientific">Arabidopsis thaliana</name>
    <name type="common">Mouse-ear cress</name>
    <dbReference type="NCBI Taxonomy" id="3702"/>
    <lineage>
        <taxon>Eukaryota</taxon>
        <taxon>Viridiplantae</taxon>
        <taxon>Streptophyta</taxon>
        <taxon>Embryophyta</taxon>
        <taxon>Tracheophyta</taxon>
        <taxon>Spermatophyta</taxon>
        <taxon>Magnoliopsida</taxon>
        <taxon>eudicotyledons</taxon>
        <taxon>Gunneridae</taxon>
        <taxon>Pentapetalae</taxon>
        <taxon>rosids</taxon>
        <taxon>malvids</taxon>
        <taxon>Brassicales</taxon>
        <taxon>Brassicaceae</taxon>
        <taxon>Camelineae</taxon>
        <taxon>Arabidopsis</taxon>
    </lineage>
</organism>
<evidence type="ECO:0000250" key="1"/>
<evidence type="ECO:0000255" key="2"/>
<evidence type="ECO:0000256" key="3">
    <source>
        <dbReference type="SAM" id="MobiDB-lite"/>
    </source>
</evidence>
<evidence type="ECO:0000269" key="4">
    <source>
    </source>
</evidence>
<evidence type="ECO:0000305" key="5"/>
<accession>Q9FE29</accession>
<accession>O23412</accession>
<protein>
    <recommendedName>
        <fullName>CASP-like protein 1D1</fullName>
        <shortName>AtCASPL1D1</shortName>
    </recommendedName>
</protein>
<keyword id="KW-1003">Cell membrane</keyword>
<keyword id="KW-0472">Membrane</keyword>
<keyword id="KW-1185">Reference proteome</keyword>
<keyword id="KW-0812">Transmembrane</keyword>
<keyword id="KW-1133">Transmembrane helix</keyword>
<feature type="chain" id="PRO_0000308675" description="CASP-like protein 1D1">
    <location>
        <begin position="1"/>
        <end position="193"/>
    </location>
</feature>
<feature type="topological domain" description="Cytoplasmic" evidence="2">
    <location>
        <begin position="1"/>
        <end position="30"/>
    </location>
</feature>
<feature type="transmembrane region" description="Helical" evidence="2">
    <location>
        <begin position="31"/>
        <end position="51"/>
    </location>
</feature>
<feature type="topological domain" description="Extracellular" evidence="2">
    <location>
        <begin position="52"/>
        <end position="76"/>
    </location>
</feature>
<feature type="transmembrane region" description="Helical" evidence="2">
    <location>
        <begin position="77"/>
        <end position="97"/>
    </location>
</feature>
<feature type="topological domain" description="Cytoplasmic" evidence="2">
    <location>
        <begin position="98"/>
        <end position="108"/>
    </location>
</feature>
<feature type="transmembrane region" description="Helical" evidence="2">
    <location>
        <begin position="109"/>
        <end position="129"/>
    </location>
</feature>
<feature type="topological domain" description="Extracellular" evidence="2">
    <location>
        <begin position="130"/>
        <end position="162"/>
    </location>
</feature>
<feature type="transmembrane region" description="Helical" evidence="2">
    <location>
        <begin position="163"/>
        <end position="183"/>
    </location>
</feature>
<feature type="topological domain" description="Cytoplasmic" evidence="2">
    <location>
        <begin position="184"/>
        <end position="193"/>
    </location>
</feature>
<feature type="region of interest" description="Disordered" evidence="3">
    <location>
        <begin position="1"/>
        <end position="24"/>
    </location>
</feature>
<feature type="compositionally biased region" description="Polar residues" evidence="3">
    <location>
        <begin position="14"/>
        <end position="24"/>
    </location>
</feature>
<comment type="subunit">
    <text evidence="1">Homodimer and heterodimers.</text>
</comment>
<comment type="subcellular location">
    <subcellularLocation>
        <location evidence="4">Cell membrane</location>
        <topology evidence="4">Multi-pass membrane protein</topology>
    </subcellularLocation>
</comment>
<comment type="similarity">
    <text evidence="5">Belongs to the Casparian strip membrane proteins (CASP) family.</text>
</comment>
<comment type="sequence caution" evidence="5">
    <conflict type="erroneous initiation">
        <sequence resource="EMBL-CDS" id="AAG40073"/>
    </conflict>
    <text>Truncated N-terminus.</text>
</comment>
<comment type="sequence caution" evidence="5">
    <conflict type="erroneous initiation">
        <sequence resource="EMBL-CDS" id="CAB10339"/>
    </conflict>
    <text>Truncated N-terminus.</text>
</comment>
<comment type="sequence caution" evidence="5">
    <conflict type="erroneous initiation">
        <sequence resource="EMBL-CDS" id="CAB78603"/>
    </conflict>
    <text>Truncated N-terminus.</text>
</comment>
<proteinExistence type="evidence at transcript level"/>
<dbReference type="EMBL" id="Z97339">
    <property type="protein sequence ID" value="CAB10339.1"/>
    <property type="status" value="ALT_INIT"/>
    <property type="molecule type" value="Genomic_DNA"/>
</dbReference>
<dbReference type="EMBL" id="AL161542">
    <property type="protein sequence ID" value="CAB78603.1"/>
    <property type="status" value="ALT_INIT"/>
    <property type="molecule type" value="Genomic_DNA"/>
</dbReference>
<dbReference type="EMBL" id="CP002687">
    <property type="protein sequence ID" value="AEE83628.1"/>
    <property type="molecule type" value="Genomic_DNA"/>
</dbReference>
<dbReference type="EMBL" id="AF324722">
    <property type="protein sequence ID" value="AAG40073.2"/>
    <property type="status" value="ALT_INIT"/>
    <property type="molecule type" value="mRNA"/>
</dbReference>
<dbReference type="EMBL" id="AF326884">
    <property type="protein sequence ID" value="AAG41466.1"/>
    <property type="molecule type" value="mRNA"/>
</dbReference>
<dbReference type="EMBL" id="AY113938">
    <property type="protein sequence ID" value="AAM44986.1"/>
    <property type="molecule type" value="mRNA"/>
</dbReference>
<dbReference type="EMBL" id="AK226478">
    <property type="protein sequence ID" value="BAE98620.1"/>
    <property type="molecule type" value="mRNA"/>
</dbReference>
<dbReference type="EMBL" id="AY086594">
    <property type="protein sequence ID" value="AAM63654.1"/>
    <property type="molecule type" value="mRNA"/>
</dbReference>
<dbReference type="PIR" id="A71421">
    <property type="entry name" value="A71421"/>
</dbReference>
<dbReference type="RefSeq" id="NP_567472.1">
    <property type="nucleotide sequence ID" value="NM_117652.4"/>
</dbReference>
<dbReference type="SMR" id="Q9FE29"/>
<dbReference type="BioGRID" id="12532">
    <property type="interactions" value="4"/>
</dbReference>
<dbReference type="FunCoup" id="Q9FE29">
    <property type="interactions" value="18"/>
</dbReference>
<dbReference type="STRING" id="3702.Q9FE29"/>
<dbReference type="iPTMnet" id="Q9FE29"/>
<dbReference type="SwissPalm" id="Q9FE29"/>
<dbReference type="PaxDb" id="3702-AT4G15610.1"/>
<dbReference type="ProteomicsDB" id="222629"/>
<dbReference type="EnsemblPlants" id="AT4G15610.1">
    <property type="protein sequence ID" value="AT4G15610.1"/>
    <property type="gene ID" value="AT4G15610"/>
</dbReference>
<dbReference type="GeneID" id="827238"/>
<dbReference type="Gramene" id="AT4G15610.1">
    <property type="protein sequence ID" value="AT4G15610.1"/>
    <property type="gene ID" value="AT4G15610"/>
</dbReference>
<dbReference type="KEGG" id="ath:AT4G15610"/>
<dbReference type="Araport" id="AT4G15610"/>
<dbReference type="TAIR" id="AT4G15610">
    <property type="gene designation" value="CASPL1D1"/>
</dbReference>
<dbReference type="eggNOG" id="ENOG502S2UF">
    <property type="taxonomic scope" value="Eukaryota"/>
</dbReference>
<dbReference type="HOGENOM" id="CLU_066104_1_2_1"/>
<dbReference type="InParanoid" id="Q9FE29"/>
<dbReference type="OMA" id="RHIGSSI"/>
<dbReference type="OrthoDB" id="1926504at2759"/>
<dbReference type="PhylomeDB" id="Q9FE29"/>
<dbReference type="PRO" id="PR:Q9FE29"/>
<dbReference type="Proteomes" id="UP000006548">
    <property type="component" value="Chromosome 4"/>
</dbReference>
<dbReference type="ExpressionAtlas" id="Q9FE29">
    <property type="expression patterns" value="baseline and differential"/>
</dbReference>
<dbReference type="GO" id="GO:0005768">
    <property type="term" value="C:endosome"/>
    <property type="evidence" value="ECO:0007005"/>
    <property type="project" value="TAIR"/>
</dbReference>
<dbReference type="GO" id="GO:0005794">
    <property type="term" value="C:Golgi apparatus"/>
    <property type="evidence" value="ECO:0007005"/>
    <property type="project" value="TAIR"/>
</dbReference>
<dbReference type="GO" id="GO:0005886">
    <property type="term" value="C:plasma membrane"/>
    <property type="evidence" value="ECO:0000314"/>
    <property type="project" value="UniProtKB"/>
</dbReference>
<dbReference type="GO" id="GO:0005802">
    <property type="term" value="C:trans-Golgi network"/>
    <property type="evidence" value="ECO:0007005"/>
    <property type="project" value="TAIR"/>
</dbReference>
<dbReference type="InterPro" id="IPR006459">
    <property type="entry name" value="CASP/CASPL"/>
</dbReference>
<dbReference type="InterPro" id="IPR006702">
    <property type="entry name" value="CASP_dom"/>
</dbReference>
<dbReference type="InterPro" id="IPR044173">
    <property type="entry name" value="CASPL"/>
</dbReference>
<dbReference type="NCBIfam" id="TIGR01569">
    <property type="entry name" value="A_tha_TIGR01569"/>
    <property type="match status" value="1"/>
</dbReference>
<dbReference type="PANTHER" id="PTHR36488">
    <property type="entry name" value="CASP-LIKE PROTEIN 1U1"/>
    <property type="match status" value="1"/>
</dbReference>
<dbReference type="PANTHER" id="PTHR36488:SF8">
    <property type="entry name" value="CASP-LIKE PROTEIN 1U1"/>
    <property type="match status" value="1"/>
</dbReference>
<dbReference type="Pfam" id="PF04535">
    <property type="entry name" value="CASP_dom"/>
    <property type="match status" value="1"/>
</dbReference>